<gene>
    <name evidence="1" type="primary">utp10</name>
    <name type="ORF">ACLA_086630</name>
</gene>
<keyword id="KW-0472">Membrane</keyword>
<keyword id="KW-0539">Nucleus</keyword>
<keyword id="KW-1185">Reference proteome</keyword>
<keyword id="KW-0677">Repeat</keyword>
<keyword id="KW-0687">Ribonucleoprotein</keyword>
<keyword id="KW-0690">Ribosome biogenesis</keyword>
<keyword id="KW-0698">rRNA processing</keyword>
<keyword id="KW-0812">Transmembrane</keyword>
<keyword id="KW-1133">Transmembrane helix</keyword>
<accession>A1CUH7</accession>
<dbReference type="EMBL" id="DS027060">
    <property type="protein sequence ID" value="EAW06964.1"/>
    <property type="molecule type" value="Genomic_DNA"/>
</dbReference>
<dbReference type="RefSeq" id="XP_001268390.1">
    <property type="nucleotide sequence ID" value="XM_001268389.1"/>
</dbReference>
<dbReference type="SMR" id="A1CUH7"/>
<dbReference type="STRING" id="344612.A1CUH7"/>
<dbReference type="EnsemblFungi" id="EAW06964">
    <property type="protein sequence ID" value="EAW06964"/>
    <property type="gene ID" value="ACLA_086630"/>
</dbReference>
<dbReference type="GeneID" id="4700311"/>
<dbReference type="KEGG" id="act:ACLA_086630"/>
<dbReference type="VEuPathDB" id="FungiDB:ACLA_086630"/>
<dbReference type="eggNOG" id="KOG1837">
    <property type="taxonomic scope" value="Eukaryota"/>
</dbReference>
<dbReference type="HOGENOM" id="CLU_001128_3_1_1"/>
<dbReference type="OMA" id="NDVMWKQ"/>
<dbReference type="OrthoDB" id="31183at2759"/>
<dbReference type="Proteomes" id="UP000006701">
    <property type="component" value="Unassembled WGS sequence"/>
</dbReference>
<dbReference type="GO" id="GO:0030686">
    <property type="term" value="C:90S preribosome"/>
    <property type="evidence" value="ECO:0007669"/>
    <property type="project" value="TreeGrafter"/>
</dbReference>
<dbReference type="GO" id="GO:0016020">
    <property type="term" value="C:membrane"/>
    <property type="evidence" value="ECO:0007669"/>
    <property type="project" value="UniProtKB-SubCell"/>
</dbReference>
<dbReference type="GO" id="GO:0032040">
    <property type="term" value="C:small-subunit processome"/>
    <property type="evidence" value="ECO:0007669"/>
    <property type="project" value="TreeGrafter"/>
</dbReference>
<dbReference type="GO" id="GO:0034455">
    <property type="term" value="C:t-UTP complex"/>
    <property type="evidence" value="ECO:0007669"/>
    <property type="project" value="TreeGrafter"/>
</dbReference>
<dbReference type="GO" id="GO:0030515">
    <property type="term" value="F:snoRNA binding"/>
    <property type="evidence" value="ECO:0007669"/>
    <property type="project" value="TreeGrafter"/>
</dbReference>
<dbReference type="GO" id="GO:0000462">
    <property type="term" value="P:maturation of SSU-rRNA from tricistronic rRNA transcript (SSU-rRNA, 5.8S rRNA, LSU-rRNA)"/>
    <property type="evidence" value="ECO:0007669"/>
    <property type="project" value="TreeGrafter"/>
</dbReference>
<dbReference type="GO" id="GO:0045943">
    <property type="term" value="P:positive regulation of transcription by RNA polymerase I"/>
    <property type="evidence" value="ECO:0007669"/>
    <property type="project" value="TreeGrafter"/>
</dbReference>
<dbReference type="Gene3D" id="1.25.10.10">
    <property type="entry name" value="Leucine-rich Repeat Variant"/>
    <property type="match status" value="3"/>
</dbReference>
<dbReference type="InterPro" id="IPR011989">
    <property type="entry name" value="ARM-like"/>
</dbReference>
<dbReference type="InterPro" id="IPR016024">
    <property type="entry name" value="ARM-type_fold"/>
</dbReference>
<dbReference type="InterPro" id="IPR012954">
    <property type="entry name" value="BP28_C_dom"/>
</dbReference>
<dbReference type="InterPro" id="IPR000357">
    <property type="entry name" value="HEAT"/>
</dbReference>
<dbReference type="InterPro" id="IPR021133">
    <property type="entry name" value="HEAT_type_2"/>
</dbReference>
<dbReference type="InterPro" id="IPR056473">
    <property type="entry name" value="HEAT_Utp10/HEAT1"/>
</dbReference>
<dbReference type="InterPro" id="IPR022125">
    <property type="entry name" value="U3snoRNP10_N"/>
</dbReference>
<dbReference type="InterPro" id="IPR040191">
    <property type="entry name" value="UTP10"/>
</dbReference>
<dbReference type="PANTHER" id="PTHR13457">
    <property type="entry name" value="BAP28"/>
    <property type="match status" value="1"/>
</dbReference>
<dbReference type="PANTHER" id="PTHR13457:SF1">
    <property type="entry name" value="HEAT REPEAT-CONTAINING PROTEIN 1"/>
    <property type="match status" value="1"/>
</dbReference>
<dbReference type="Pfam" id="PF08146">
    <property type="entry name" value="BP28CT"/>
    <property type="match status" value="1"/>
</dbReference>
<dbReference type="Pfam" id="PF02985">
    <property type="entry name" value="HEAT"/>
    <property type="match status" value="1"/>
</dbReference>
<dbReference type="Pfam" id="PF23243">
    <property type="entry name" value="HEAT_HEATR1"/>
    <property type="match status" value="1"/>
</dbReference>
<dbReference type="Pfam" id="PF12397">
    <property type="entry name" value="U3snoRNP10"/>
    <property type="match status" value="1"/>
</dbReference>
<dbReference type="SMART" id="SM01036">
    <property type="entry name" value="BP28CT"/>
    <property type="match status" value="1"/>
</dbReference>
<dbReference type="SUPFAM" id="SSF48371">
    <property type="entry name" value="ARM repeat"/>
    <property type="match status" value="2"/>
</dbReference>
<dbReference type="PROSITE" id="PS50077">
    <property type="entry name" value="HEAT_REPEAT"/>
    <property type="match status" value="2"/>
</dbReference>
<feature type="chain" id="PRO_0000308493" description="U3 small nucleolar RNA-associated protein 10">
    <location>
        <begin position="1"/>
        <end position="1819"/>
    </location>
</feature>
<feature type="transmembrane region" description="Helical" evidence="2">
    <location>
        <begin position="945"/>
        <end position="965"/>
    </location>
</feature>
<feature type="transmembrane region" description="Helical" evidence="2">
    <location>
        <begin position="1001"/>
        <end position="1021"/>
    </location>
</feature>
<feature type="repeat" description="HEAT 1" evidence="2">
    <location>
        <begin position="583"/>
        <end position="620"/>
    </location>
</feature>
<feature type="repeat" description="HEAT 2" evidence="2">
    <location>
        <begin position="1045"/>
        <end position="1082"/>
    </location>
</feature>
<feature type="repeat" description="HEAT 3" evidence="2">
    <location>
        <begin position="1269"/>
        <end position="1306"/>
    </location>
</feature>
<feature type="repeat" description="HEAT 4" evidence="2">
    <location>
        <begin position="1313"/>
        <end position="1351"/>
    </location>
</feature>
<feature type="repeat" description="HEAT 5" evidence="2">
    <location>
        <begin position="1775"/>
        <end position="1812"/>
    </location>
</feature>
<proteinExistence type="inferred from homology"/>
<protein>
    <recommendedName>
        <fullName>U3 small nucleolar RNA-associated protein 10</fullName>
    </recommendedName>
</protein>
<evidence type="ECO:0000250" key="1">
    <source>
        <dbReference type="UniProtKB" id="P42945"/>
    </source>
</evidence>
<evidence type="ECO:0000255" key="2"/>
<evidence type="ECO:0000305" key="3"/>
<reference key="1">
    <citation type="journal article" date="2008" name="PLoS Genet.">
        <title>Genomic islands in the pathogenic filamentous fungus Aspergillus fumigatus.</title>
        <authorList>
            <person name="Fedorova N.D."/>
            <person name="Khaldi N."/>
            <person name="Joardar V.S."/>
            <person name="Maiti R."/>
            <person name="Amedeo P."/>
            <person name="Anderson M.J."/>
            <person name="Crabtree J."/>
            <person name="Silva J.C."/>
            <person name="Badger J.H."/>
            <person name="Albarraq A."/>
            <person name="Angiuoli S."/>
            <person name="Bussey H."/>
            <person name="Bowyer P."/>
            <person name="Cotty P.J."/>
            <person name="Dyer P.S."/>
            <person name="Egan A."/>
            <person name="Galens K."/>
            <person name="Fraser-Liggett C.M."/>
            <person name="Haas B.J."/>
            <person name="Inman J.M."/>
            <person name="Kent R."/>
            <person name="Lemieux S."/>
            <person name="Malavazi I."/>
            <person name="Orvis J."/>
            <person name="Roemer T."/>
            <person name="Ronning C.M."/>
            <person name="Sundaram J.P."/>
            <person name="Sutton G."/>
            <person name="Turner G."/>
            <person name="Venter J.C."/>
            <person name="White O.R."/>
            <person name="Whitty B.R."/>
            <person name="Youngman P."/>
            <person name="Wolfe K.H."/>
            <person name="Goldman G.H."/>
            <person name="Wortman J.R."/>
            <person name="Jiang B."/>
            <person name="Denning D.W."/>
            <person name="Nierman W.C."/>
        </authorList>
    </citation>
    <scope>NUCLEOTIDE SEQUENCE [LARGE SCALE GENOMIC DNA]</scope>
    <source>
        <strain>ATCC 1007 / CBS 513.65 / DSM 816 / NCTC 3887 / NRRL 1 / QM 1276 / 107</strain>
    </source>
</reference>
<sequence>MASSLAAQLSQIAAKSTNQLDLKAQRLSHSQSLIFDRKVAGTQDFDTVYQICFEGFQELCQLDARFNSFERTIFSEQSKTEDRTQLSAAQNKELDVVLEAFLALVGGRLLLSPAVKAVDWLIRRFRVHEYNTEFTILTFLPYYTTPLFLNLLSILPEDLTPTFKILIPYKKGLLNPPRHPLVHSATTNRAFLAAVNNYVLTVSRQQAHHHALLAFWAGIITEAVAGMLDSSRSGRREVEKQKHEDIILRILPILNDGFALKNVSELVIGCYMVSVVLAQKSSLQDKLLDGLMEAVAGSWTEETLESGLVCLAVLAQQKPETRLPRRALKAILRLDDIVKRLTDISSQYQTSNLLLGVVAGCVDDLTKHKDTARLELLPRVFQTQLLGELETSKAMAMVLHAASNAHRDGTMSLDTQACLADLVQEFNQSEFLQPIFQKTIAESTFDTAAIEHNLQTVIVTAPAPRAVEDVVMGDAEKVVEQDGFSSTLEALVGEKLFKSSFLSAQSIPVFDRLVQAFALAASSEEKTQVFSDLAVLGKSEVSKSPQYLSFFIRVFSGPYPIGTRAMALNIVATFLTSTSNLDLDFQAILPFLLVALADPSERIRREAAAALAAIGGIYKKHKKGENVWGRDTIYGQEKQSKSVQWLPTRDAQKVFERAVLPSLEECIFDPGHISKVLETTLRGASVDPNASELKKPLRLSFFTFLCSHAIQLPLFTPKLGLLGLLNRIDKAGGTTRTKELEPLLKAWRGLSEQEVSDICEKQRVPVSEVESQMVTIVTPKEKDALTLLLSNVSPYSESLRSTFVAAIFARVKDIWARVSEDRQVLAAEQLFDIALGLSDSALVNNCRNLLRSVELPGSVLIEFLEKIPVSLTDMEAVGPAPKRRRTSQSNMIAMTVKDEAEFGKVMEKMTFILELVDSSSPETHPELADGLFQTLAALHHFKSQIQSGMSYLLSLTLGSLLAIVNRSKESAKAQFDTSVIRADLVVDCVRTTESPQVQNAALLLVSGLSVIAPELVLHSVMPIFTFMGSSVLRKDDEYSVSVIDQTIDQVVPALIQSLRNQKRDVVSGTSELLLSFTAAFEHIPSHRRLRLFHALITKLGTQDFLFAVLAMLANRYAMDKDVLVLMTGLVSDASAPVELTVRRVHFYCGDSFLTKLQTYYKYLDLVTDSLKAKPSISQVLLGIGSDDGREPQKVAVDLLRDLAYLFKHSSLKVKMAKAFASEDEEVIGQIRALFSRILEQVLTIGDSVQSMKLVGQANSDVLGALFGTLTLVDFLDTIEVLLQRPSDELRRKVLRLLEGRLRQNPERDGASQIRVLDFLPTLVDIVRSSPDILLKHAAVACIDRIAEKYGKKDPSRVVSAAQVVASEACIGQEDDRIRIMGVLCLASMADVLGQAMIPALPEALSRSLALLEVSLEKGKENSRLHDATFSLFSALFVHIPYMISGPILDQILLLSFKSANAEDCEDDGRQEALRMMARKVDMAATLGAVDRNWQYAVQAGPAAAKETLEVVSLAIEKHPKSATGKNIGVLTSILFKVFDLRREQLALGSKATFEMADIEEIEESVNDVTIKMIYKLNDSTFRPIFTKLQDWAIAGLPKKDTQGSLARLTTFYKFLQVFFGTLQSIVTGYASYIIESVVSILGKASPSDKNTKSLWLATMRLLRSAFEHDQDEFWQSPSHLTQISKPLISQLAHATNSSTAALVIAEAVPTITELAIAADSTDNHKDLNTLLMRFLRPSSGPTGNRVAGGENPHTRLAALKAEQSLTEQLGEEWLALLPEMLPYISELMEDEDENVEREVRKWVKQIENVLGEKLDDMLT</sequence>
<organism>
    <name type="scientific">Aspergillus clavatus (strain ATCC 1007 / CBS 513.65 / DSM 816 / NCTC 3887 / NRRL 1 / QM 1276 / 107)</name>
    <dbReference type="NCBI Taxonomy" id="344612"/>
    <lineage>
        <taxon>Eukaryota</taxon>
        <taxon>Fungi</taxon>
        <taxon>Dikarya</taxon>
        <taxon>Ascomycota</taxon>
        <taxon>Pezizomycotina</taxon>
        <taxon>Eurotiomycetes</taxon>
        <taxon>Eurotiomycetidae</taxon>
        <taxon>Eurotiales</taxon>
        <taxon>Aspergillaceae</taxon>
        <taxon>Aspergillus</taxon>
        <taxon>Aspergillus subgen. Fumigati</taxon>
    </lineage>
</organism>
<comment type="function">
    <text evidence="1">Involved in nucleolar processing of pre-18S ribosomal RNA. Involved in ribosome biosynthesis (By similarity).</text>
</comment>
<comment type="subunit">
    <text evidence="1">Component of the ribosomal small subunit (SSU) processome.</text>
</comment>
<comment type="subcellular location">
    <subcellularLocation>
        <location evidence="1 2">Nucleus</location>
        <location evidence="1 2">Nucleolus</location>
    </subcellularLocation>
    <subcellularLocation>
        <location evidence="2">Membrane</location>
        <topology evidence="2">Multi-pass membrane protein</topology>
    </subcellularLocation>
</comment>
<comment type="similarity">
    <text evidence="3">Belongs to the HEATR1/UTP10 family.</text>
</comment>
<name>UTP10_ASPCL</name>